<evidence type="ECO:0000255" key="1">
    <source>
        <dbReference type="HAMAP-Rule" id="MF_00564"/>
    </source>
</evidence>
<organism>
    <name type="scientific">Rhodospirillum rubrum (strain ATCC 11170 / ATH 1.1.1 / DSM 467 / LMG 4362 / NCIMB 8255 / S1)</name>
    <dbReference type="NCBI Taxonomy" id="269796"/>
    <lineage>
        <taxon>Bacteria</taxon>
        <taxon>Pseudomonadati</taxon>
        <taxon>Pseudomonadota</taxon>
        <taxon>Alphaproteobacteria</taxon>
        <taxon>Rhodospirillales</taxon>
        <taxon>Rhodospirillaceae</taxon>
        <taxon>Rhodospirillum</taxon>
    </lineage>
</organism>
<feature type="chain" id="PRO_1000024866" description="Ribonuclease PH">
    <location>
        <begin position="1"/>
        <end position="240"/>
    </location>
</feature>
<feature type="binding site" evidence="1">
    <location>
        <position position="86"/>
    </location>
    <ligand>
        <name>phosphate</name>
        <dbReference type="ChEBI" id="CHEBI:43474"/>
        <note>substrate</note>
    </ligand>
</feature>
<feature type="binding site" evidence="1">
    <location>
        <begin position="124"/>
        <end position="126"/>
    </location>
    <ligand>
        <name>phosphate</name>
        <dbReference type="ChEBI" id="CHEBI:43474"/>
        <note>substrate</note>
    </ligand>
</feature>
<reference key="1">
    <citation type="journal article" date="2011" name="Stand. Genomic Sci.">
        <title>Complete genome sequence of Rhodospirillum rubrum type strain (S1).</title>
        <authorList>
            <person name="Munk A.C."/>
            <person name="Copeland A."/>
            <person name="Lucas S."/>
            <person name="Lapidus A."/>
            <person name="Del Rio T.G."/>
            <person name="Barry K."/>
            <person name="Detter J.C."/>
            <person name="Hammon N."/>
            <person name="Israni S."/>
            <person name="Pitluck S."/>
            <person name="Brettin T."/>
            <person name="Bruce D."/>
            <person name="Han C."/>
            <person name="Tapia R."/>
            <person name="Gilna P."/>
            <person name="Schmutz J."/>
            <person name="Larimer F."/>
            <person name="Land M."/>
            <person name="Kyrpides N.C."/>
            <person name="Mavromatis K."/>
            <person name="Richardson P."/>
            <person name="Rohde M."/>
            <person name="Goeker M."/>
            <person name="Klenk H.P."/>
            <person name="Zhang Y."/>
            <person name="Roberts G.P."/>
            <person name="Reslewic S."/>
            <person name="Schwartz D.C."/>
        </authorList>
    </citation>
    <scope>NUCLEOTIDE SEQUENCE [LARGE SCALE GENOMIC DNA]</scope>
    <source>
        <strain>ATCC 11170 / ATH 1.1.1 / DSM 467 / LMG 4362 / NCIMB 8255 / S1</strain>
    </source>
</reference>
<keyword id="KW-0548">Nucleotidyltransferase</keyword>
<keyword id="KW-1185">Reference proteome</keyword>
<keyword id="KW-0694">RNA-binding</keyword>
<keyword id="KW-0698">rRNA processing</keyword>
<keyword id="KW-0808">Transferase</keyword>
<keyword id="KW-0819">tRNA processing</keyword>
<keyword id="KW-0820">tRNA-binding</keyword>
<protein>
    <recommendedName>
        <fullName evidence="1">Ribonuclease PH</fullName>
        <shortName evidence="1">RNase PH</shortName>
        <ecNumber evidence="1">2.7.7.56</ecNumber>
    </recommendedName>
    <alternativeName>
        <fullName evidence="1">tRNA nucleotidyltransferase</fullName>
    </alternativeName>
</protein>
<dbReference type="EC" id="2.7.7.56" evidence="1"/>
<dbReference type="EMBL" id="CP000230">
    <property type="protein sequence ID" value="ABC24435.1"/>
    <property type="molecule type" value="Genomic_DNA"/>
</dbReference>
<dbReference type="RefSeq" id="WP_011391388.1">
    <property type="nucleotide sequence ID" value="NC_007643.1"/>
</dbReference>
<dbReference type="RefSeq" id="YP_428722.1">
    <property type="nucleotide sequence ID" value="NC_007643.1"/>
</dbReference>
<dbReference type="SMR" id="Q2RN60"/>
<dbReference type="STRING" id="269796.Rru_A3641"/>
<dbReference type="EnsemblBacteria" id="ABC24435">
    <property type="protein sequence ID" value="ABC24435"/>
    <property type="gene ID" value="Rru_A3641"/>
</dbReference>
<dbReference type="KEGG" id="rru:Rru_A3641"/>
<dbReference type="PATRIC" id="fig|269796.9.peg.3763"/>
<dbReference type="eggNOG" id="COG0689">
    <property type="taxonomic scope" value="Bacteria"/>
</dbReference>
<dbReference type="HOGENOM" id="CLU_050858_0_0_5"/>
<dbReference type="PhylomeDB" id="Q2RN60"/>
<dbReference type="Proteomes" id="UP000001929">
    <property type="component" value="Chromosome"/>
</dbReference>
<dbReference type="GO" id="GO:0000175">
    <property type="term" value="F:3'-5'-RNA exonuclease activity"/>
    <property type="evidence" value="ECO:0007669"/>
    <property type="project" value="UniProtKB-UniRule"/>
</dbReference>
<dbReference type="GO" id="GO:0000049">
    <property type="term" value="F:tRNA binding"/>
    <property type="evidence" value="ECO:0007669"/>
    <property type="project" value="UniProtKB-UniRule"/>
</dbReference>
<dbReference type="GO" id="GO:0009022">
    <property type="term" value="F:tRNA nucleotidyltransferase activity"/>
    <property type="evidence" value="ECO:0007669"/>
    <property type="project" value="UniProtKB-UniRule"/>
</dbReference>
<dbReference type="GO" id="GO:0016075">
    <property type="term" value="P:rRNA catabolic process"/>
    <property type="evidence" value="ECO:0007669"/>
    <property type="project" value="UniProtKB-UniRule"/>
</dbReference>
<dbReference type="GO" id="GO:0006364">
    <property type="term" value="P:rRNA processing"/>
    <property type="evidence" value="ECO:0007669"/>
    <property type="project" value="UniProtKB-KW"/>
</dbReference>
<dbReference type="GO" id="GO:0008033">
    <property type="term" value="P:tRNA processing"/>
    <property type="evidence" value="ECO:0007669"/>
    <property type="project" value="UniProtKB-UniRule"/>
</dbReference>
<dbReference type="CDD" id="cd11362">
    <property type="entry name" value="RNase_PH_bact"/>
    <property type="match status" value="1"/>
</dbReference>
<dbReference type="FunFam" id="3.30.230.70:FF:000003">
    <property type="entry name" value="Ribonuclease PH"/>
    <property type="match status" value="1"/>
</dbReference>
<dbReference type="Gene3D" id="3.30.230.70">
    <property type="entry name" value="GHMP Kinase, N-terminal domain"/>
    <property type="match status" value="1"/>
</dbReference>
<dbReference type="HAMAP" id="MF_00564">
    <property type="entry name" value="RNase_PH"/>
    <property type="match status" value="1"/>
</dbReference>
<dbReference type="InterPro" id="IPR001247">
    <property type="entry name" value="ExoRNase_PH_dom1"/>
</dbReference>
<dbReference type="InterPro" id="IPR015847">
    <property type="entry name" value="ExoRNase_PH_dom2"/>
</dbReference>
<dbReference type="InterPro" id="IPR036345">
    <property type="entry name" value="ExoRNase_PH_dom2_sf"/>
</dbReference>
<dbReference type="InterPro" id="IPR027408">
    <property type="entry name" value="PNPase/RNase_PH_dom_sf"/>
</dbReference>
<dbReference type="InterPro" id="IPR020568">
    <property type="entry name" value="Ribosomal_Su5_D2-typ_SF"/>
</dbReference>
<dbReference type="InterPro" id="IPR050080">
    <property type="entry name" value="RNase_PH"/>
</dbReference>
<dbReference type="InterPro" id="IPR002381">
    <property type="entry name" value="RNase_PH_bac-type"/>
</dbReference>
<dbReference type="InterPro" id="IPR018336">
    <property type="entry name" value="RNase_PH_CS"/>
</dbReference>
<dbReference type="NCBIfam" id="TIGR01966">
    <property type="entry name" value="RNasePH"/>
    <property type="match status" value="1"/>
</dbReference>
<dbReference type="PANTHER" id="PTHR11953">
    <property type="entry name" value="EXOSOME COMPLEX COMPONENT"/>
    <property type="match status" value="1"/>
</dbReference>
<dbReference type="PANTHER" id="PTHR11953:SF0">
    <property type="entry name" value="EXOSOME COMPLEX COMPONENT RRP41"/>
    <property type="match status" value="1"/>
</dbReference>
<dbReference type="Pfam" id="PF01138">
    <property type="entry name" value="RNase_PH"/>
    <property type="match status" value="1"/>
</dbReference>
<dbReference type="Pfam" id="PF03725">
    <property type="entry name" value="RNase_PH_C"/>
    <property type="match status" value="1"/>
</dbReference>
<dbReference type="SUPFAM" id="SSF55666">
    <property type="entry name" value="Ribonuclease PH domain 2-like"/>
    <property type="match status" value="1"/>
</dbReference>
<dbReference type="SUPFAM" id="SSF54211">
    <property type="entry name" value="Ribosomal protein S5 domain 2-like"/>
    <property type="match status" value="1"/>
</dbReference>
<dbReference type="PROSITE" id="PS01277">
    <property type="entry name" value="RIBONUCLEASE_PH"/>
    <property type="match status" value="1"/>
</dbReference>
<gene>
    <name evidence="1" type="primary">rph</name>
    <name type="ordered locus">Rru_A3641</name>
</gene>
<name>RNPH_RHORT</name>
<comment type="function">
    <text evidence="1">Phosphorolytic 3'-5' exoribonuclease that plays an important role in tRNA 3'-end maturation. Removes nucleotide residues following the 3'-CCA terminus of tRNAs; can also add nucleotides to the ends of RNA molecules by using nucleoside diphosphates as substrates, but this may not be physiologically important. Probably plays a role in initiation of 16S rRNA degradation (leading to ribosome degradation) during starvation.</text>
</comment>
<comment type="catalytic activity">
    <reaction evidence="1">
        <text>tRNA(n+1) + phosphate = tRNA(n) + a ribonucleoside 5'-diphosphate</text>
        <dbReference type="Rhea" id="RHEA:10628"/>
        <dbReference type="Rhea" id="RHEA-COMP:17343"/>
        <dbReference type="Rhea" id="RHEA-COMP:17344"/>
        <dbReference type="ChEBI" id="CHEBI:43474"/>
        <dbReference type="ChEBI" id="CHEBI:57930"/>
        <dbReference type="ChEBI" id="CHEBI:173114"/>
        <dbReference type="EC" id="2.7.7.56"/>
    </reaction>
</comment>
<comment type="subunit">
    <text evidence="1">Homohexameric ring arranged as a trimer of dimers.</text>
</comment>
<comment type="similarity">
    <text evidence="1">Belongs to the RNase PH family.</text>
</comment>
<sequence length="240" mass="25601">MRPSGRAVDSLRSIVLEPGYSKHAEGSCMARFGDTHVLCTASIEERVPGWMRGGGKGWVTAEYGMLPRSTHTRTDREAARGRQSGRTQEIQRLIGRSLRSVTDLKKIGEIQIRLDCDVIQADGGTRTAAITGSWVALYQALARFEKLGLGALPPLTDHVAAVSCGLCDGVAVLDLDYAEDSTAQADANFVLTGTGGIVEIQGTAETSPFAQAQFMELLALAQKGITELVALQKAALASLR</sequence>
<proteinExistence type="inferred from homology"/>
<accession>Q2RN60</accession>